<proteinExistence type="inferred from homology"/>
<organism>
    <name type="scientific">Synechococcus sp. (strain CC9605)</name>
    <dbReference type="NCBI Taxonomy" id="110662"/>
    <lineage>
        <taxon>Bacteria</taxon>
        <taxon>Bacillati</taxon>
        <taxon>Cyanobacteriota</taxon>
        <taxon>Cyanophyceae</taxon>
        <taxon>Synechococcales</taxon>
        <taxon>Synechococcaceae</taxon>
        <taxon>Synechococcus</taxon>
    </lineage>
</organism>
<name>EFG_SYNSC</name>
<protein>
    <recommendedName>
        <fullName evidence="1">Elongation factor G</fullName>
        <shortName evidence="1">EF-G</shortName>
    </recommendedName>
</protein>
<feature type="chain" id="PRO_0000263521" description="Elongation factor G">
    <location>
        <begin position="1"/>
        <end position="691"/>
    </location>
</feature>
<feature type="domain" description="tr-type G">
    <location>
        <begin position="8"/>
        <end position="282"/>
    </location>
</feature>
<feature type="binding site" evidence="1">
    <location>
        <begin position="17"/>
        <end position="24"/>
    </location>
    <ligand>
        <name>GTP</name>
        <dbReference type="ChEBI" id="CHEBI:37565"/>
    </ligand>
</feature>
<feature type="binding site" evidence="1">
    <location>
        <begin position="81"/>
        <end position="85"/>
    </location>
    <ligand>
        <name>GTP</name>
        <dbReference type="ChEBI" id="CHEBI:37565"/>
    </ligand>
</feature>
<feature type="binding site" evidence="1">
    <location>
        <begin position="135"/>
        <end position="138"/>
    </location>
    <ligand>
        <name>GTP</name>
        <dbReference type="ChEBI" id="CHEBI:37565"/>
    </ligand>
</feature>
<comment type="function">
    <text evidence="1">Catalyzes the GTP-dependent ribosomal translocation step during translation elongation. During this step, the ribosome changes from the pre-translocational (PRE) to the post-translocational (POST) state as the newly formed A-site-bound peptidyl-tRNA and P-site-bound deacylated tRNA move to the P and E sites, respectively. Catalyzes the coordinated movement of the two tRNA molecules, the mRNA and conformational changes in the ribosome.</text>
</comment>
<comment type="subcellular location">
    <subcellularLocation>
        <location evidence="1">Cytoplasm</location>
    </subcellularLocation>
</comment>
<comment type="similarity">
    <text evidence="1">Belongs to the TRAFAC class translation factor GTPase superfamily. Classic translation factor GTPase family. EF-G/EF-2 subfamily.</text>
</comment>
<evidence type="ECO:0000255" key="1">
    <source>
        <dbReference type="HAMAP-Rule" id="MF_00054"/>
    </source>
</evidence>
<keyword id="KW-0963">Cytoplasm</keyword>
<keyword id="KW-0251">Elongation factor</keyword>
<keyword id="KW-0342">GTP-binding</keyword>
<keyword id="KW-0547">Nucleotide-binding</keyword>
<keyword id="KW-0648">Protein biosynthesis</keyword>
<reference key="1">
    <citation type="submission" date="2005-07" db="EMBL/GenBank/DDBJ databases">
        <title>Complete sequence of Synechococcus sp. CC9605.</title>
        <authorList>
            <consortium name="US DOE Joint Genome Institute"/>
            <person name="Copeland A."/>
            <person name="Lucas S."/>
            <person name="Lapidus A."/>
            <person name="Barry K."/>
            <person name="Detter J.C."/>
            <person name="Glavina T."/>
            <person name="Hammon N."/>
            <person name="Israni S."/>
            <person name="Pitluck S."/>
            <person name="Schmutz J."/>
            <person name="Martinez M."/>
            <person name="Larimer F."/>
            <person name="Land M."/>
            <person name="Kyrpides N."/>
            <person name="Ivanova N."/>
            <person name="Richardson P."/>
        </authorList>
    </citation>
    <scope>NUCLEOTIDE SEQUENCE [LARGE SCALE GENOMIC DNA]</scope>
    <source>
        <strain>CC9605</strain>
    </source>
</reference>
<accession>Q3AMT5</accession>
<gene>
    <name evidence="1" type="primary">fusA</name>
    <name type="ordered locus">Syncc9605_0321</name>
</gene>
<sequence length="691" mass="75031">MARDFPLERVRNIGIAAHIDAGKTTTTERILFYSGVVHKIGEVHDGAAVTDWMAQERERGITITAAAISTSWQDHRINIIDTPGHVDFTIEVERSMRVLDGVIAVFCAVGGVQPQSETVWRQADRYSVPRMVFVNKMDRTGADFLKVHGQIKDRLKANAVPIQLPIGAEGELSGIIDLVANKAYIYKNDLGTDIEEADVPADMADEVAEWRNTLMETVAETDEALIEKFLESGELSVDDLKKGIREGVLKHGLVPMLCGSAFKNKGVQLVLDAVIDYLPAPVDVPPIQGVLPDGSEAVRPSDDSAPFSALAFKVMADPYGKLTFVRMYSGILEKGSYVLNSTKGEKERISRLVVLKADDREEVDALRAGDLGAVLGLKNTTTGDTLCTQDDPIVLETLFIPEPVISVAVEPKTKGDMEKLSKALVALAEEDPTFRVNTDSETGQTVIAGMGELHLEILVDRMLREFKVEANIGAPQVSYRETIRGSAGGEGKFSRQTGGKGQYGHVVIEMEPGEPGSGFEFVNKIVGGVVPKEYIKPAEQGMKETCESGVIAGYPLIDVKCTLVHGSYHDVDSSEMAFKIAGSMAFKDGVKKCNPVLLEPMMKVEVEAPEDFLGSIIGDLSSRRGQVEGQSVEDGTSKISAKVPLAEMFGYATELRSMTQGRGIFSMEFDNYAEVPRNVAEAIISKNQGNS</sequence>
<dbReference type="EMBL" id="CP000110">
    <property type="protein sequence ID" value="ABB34097.1"/>
    <property type="molecule type" value="Genomic_DNA"/>
</dbReference>
<dbReference type="RefSeq" id="WP_011363347.1">
    <property type="nucleotide sequence ID" value="NC_007516.1"/>
</dbReference>
<dbReference type="SMR" id="Q3AMT5"/>
<dbReference type="STRING" id="110662.Syncc9605_0321"/>
<dbReference type="KEGG" id="syd:Syncc9605_0321"/>
<dbReference type="eggNOG" id="COG0480">
    <property type="taxonomic scope" value="Bacteria"/>
</dbReference>
<dbReference type="HOGENOM" id="CLU_002794_4_1_3"/>
<dbReference type="OrthoDB" id="580826at2"/>
<dbReference type="GO" id="GO:0005737">
    <property type="term" value="C:cytoplasm"/>
    <property type="evidence" value="ECO:0007669"/>
    <property type="project" value="UniProtKB-SubCell"/>
</dbReference>
<dbReference type="GO" id="GO:0005525">
    <property type="term" value="F:GTP binding"/>
    <property type="evidence" value="ECO:0007669"/>
    <property type="project" value="UniProtKB-UniRule"/>
</dbReference>
<dbReference type="GO" id="GO:0003924">
    <property type="term" value="F:GTPase activity"/>
    <property type="evidence" value="ECO:0007669"/>
    <property type="project" value="InterPro"/>
</dbReference>
<dbReference type="GO" id="GO:0003746">
    <property type="term" value="F:translation elongation factor activity"/>
    <property type="evidence" value="ECO:0007669"/>
    <property type="project" value="UniProtKB-UniRule"/>
</dbReference>
<dbReference type="GO" id="GO:0032790">
    <property type="term" value="P:ribosome disassembly"/>
    <property type="evidence" value="ECO:0007669"/>
    <property type="project" value="TreeGrafter"/>
</dbReference>
<dbReference type="CDD" id="cd01886">
    <property type="entry name" value="EF-G"/>
    <property type="match status" value="1"/>
</dbReference>
<dbReference type="CDD" id="cd16262">
    <property type="entry name" value="EFG_III"/>
    <property type="match status" value="1"/>
</dbReference>
<dbReference type="CDD" id="cd01434">
    <property type="entry name" value="EFG_mtEFG1_IV"/>
    <property type="match status" value="1"/>
</dbReference>
<dbReference type="CDD" id="cd03713">
    <property type="entry name" value="EFG_mtEFG_C"/>
    <property type="match status" value="1"/>
</dbReference>
<dbReference type="CDD" id="cd04088">
    <property type="entry name" value="EFG_mtEFG_II"/>
    <property type="match status" value="1"/>
</dbReference>
<dbReference type="FunFam" id="2.40.30.10:FF:000006">
    <property type="entry name" value="Elongation factor G"/>
    <property type="match status" value="1"/>
</dbReference>
<dbReference type="FunFam" id="3.30.230.10:FF:000003">
    <property type="entry name" value="Elongation factor G"/>
    <property type="match status" value="1"/>
</dbReference>
<dbReference type="FunFam" id="3.30.70.240:FF:000001">
    <property type="entry name" value="Elongation factor G"/>
    <property type="match status" value="1"/>
</dbReference>
<dbReference type="FunFam" id="3.30.70.870:FF:000001">
    <property type="entry name" value="Elongation factor G"/>
    <property type="match status" value="1"/>
</dbReference>
<dbReference type="FunFam" id="3.40.50.300:FF:000029">
    <property type="entry name" value="Elongation factor G"/>
    <property type="match status" value="1"/>
</dbReference>
<dbReference type="Gene3D" id="3.30.230.10">
    <property type="match status" value="1"/>
</dbReference>
<dbReference type="Gene3D" id="3.30.70.240">
    <property type="match status" value="1"/>
</dbReference>
<dbReference type="Gene3D" id="3.30.70.870">
    <property type="entry name" value="Elongation Factor G (Translational Gtpase), domain 3"/>
    <property type="match status" value="1"/>
</dbReference>
<dbReference type="Gene3D" id="3.40.50.300">
    <property type="entry name" value="P-loop containing nucleotide triphosphate hydrolases"/>
    <property type="match status" value="1"/>
</dbReference>
<dbReference type="Gene3D" id="2.40.30.10">
    <property type="entry name" value="Translation factors"/>
    <property type="match status" value="1"/>
</dbReference>
<dbReference type="HAMAP" id="MF_00054_B">
    <property type="entry name" value="EF_G_EF_2_B"/>
    <property type="match status" value="1"/>
</dbReference>
<dbReference type="InterPro" id="IPR041095">
    <property type="entry name" value="EFG_II"/>
</dbReference>
<dbReference type="InterPro" id="IPR009022">
    <property type="entry name" value="EFG_III"/>
</dbReference>
<dbReference type="InterPro" id="IPR035647">
    <property type="entry name" value="EFG_III/V"/>
</dbReference>
<dbReference type="InterPro" id="IPR047872">
    <property type="entry name" value="EFG_IV"/>
</dbReference>
<dbReference type="InterPro" id="IPR035649">
    <property type="entry name" value="EFG_V"/>
</dbReference>
<dbReference type="InterPro" id="IPR000640">
    <property type="entry name" value="EFG_V-like"/>
</dbReference>
<dbReference type="InterPro" id="IPR004161">
    <property type="entry name" value="EFTu-like_2"/>
</dbReference>
<dbReference type="InterPro" id="IPR031157">
    <property type="entry name" value="G_TR_CS"/>
</dbReference>
<dbReference type="InterPro" id="IPR027417">
    <property type="entry name" value="P-loop_NTPase"/>
</dbReference>
<dbReference type="InterPro" id="IPR020568">
    <property type="entry name" value="Ribosomal_Su5_D2-typ_SF"/>
</dbReference>
<dbReference type="InterPro" id="IPR014721">
    <property type="entry name" value="Ribsml_uS5_D2-typ_fold_subgr"/>
</dbReference>
<dbReference type="InterPro" id="IPR005225">
    <property type="entry name" value="Small_GTP-bd"/>
</dbReference>
<dbReference type="InterPro" id="IPR000795">
    <property type="entry name" value="T_Tr_GTP-bd_dom"/>
</dbReference>
<dbReference type="InterPro" id="IPR009000">
    <property type="entry name" value="Transl_B-barrel_sf"/>
</dbReference>
<dbReference type="InterPro" id="IPR004540">
    <property type="entry name" value="Transl_elong_EFG/EF2"/>
</dbReference>
<dbReference type="InterPro" id="IPR005517">
    <property type="entry name" value="Transl_elong_EFG/EF2_IV"/>
</dbReference>
<dbReference type="NCBIfam" id="TIGR00484">
    <property type="entry name" value="EF-G"/>
    <property type="match status" value="1"/>
</dbReference>
<dbReference type="NCBIfam" id="NF009379">
    <property type="entry name" value="PRK12740.1-3"/>
    <property type="match status" value="1"/>
</dbReference>
<dbReference type="NCBIfam" id="NF009381">
    <property type="entry name" value="PRK12740.1-5"/>
    <property type="match status" value="1"/>
</dbReference>
<dbReference type="NCBIfam" id="TIGR00231">
    <property type="entry name" value="small_GTP"/>
    <property type="match status" value="1"/>
</dbReference>
<dbReference type="PANTHER" id="PTHR43261:SF1">
    <property type="entry name" value="RIBOSOME-RELEASING FACTOR 2, MITOCHONDRIAL"/>
    <property type="match status" value="1"/>
</dbReference>
<dbReference type="PANTHER" id="PTHR43261">
    <property type="entry name" value="TRANSLATION ELONGATION FACTOR G-RELATED"/>
    <property type="match status" value="1"/>
</dbReference>
<dbReference type="Pfam" id="PF00679">
    <property type="entry name" value="EFG_C"/>
    <property type="match status" value="1"/>
</dbReference>
<dbReference type="Pfam" id="PF14492">
    <property type="entry name" value="EFG_III"/>
    <property type="match status" value="1"/>
</dbReference>
<dbReference type="Pfam" id="PF03764">
    <property type="entry name" value="EFG_IV"/>
    <property type="match status" value="1"/>
</dbReference>
<dbReference type="Pfam" id="PF00009">
    <property type="entry name" value="GTP_EFTU"/>
    <property type="match status" value="1"/>
</dbReference>
<dbReference type="Pfam" id="PF03144">
    <property type="entry name" value="GTP_EFTU_D2"/>
    <property type="match status" value="1"/>
</dbReference>
<dbReference type="PRINTS" id="PR00315">
    <property type="entry name" value="ELONGATNFCT"/>
</dbReference>
<dbReference type="SMART" id="SM00838">
    <property type="entry name" value="EFG_C"/>
    <property type="match status" value="1"/>
</dbReference>
<dbReference type="SMART" id="SM00889">
    <property type="entry name" value="EFG_IV"/>
    <property type="match status" value="1"/>
</dbReference>
<dbReference type="SUPFAM" id="SSF54980">
    <property type="entry name" value="EF-G C-terminal domain-like"/>
    <property type="match status" value="2"/>
</dbReference>
<dbReference type="SUPFAM" id="SSF52540">
    <property type="entry name" value="P-loop containing nucleoside triphosphate hydrolases"/>
    <property type="match status" value="1"/>
</dbReference>
<dbReference type="SUPFAM" id="SSF54211">
    <property type="entry name" value="Ribosomal protein S5 domain 2-like"/>
    <property type="match status" value="1"/>
</dbReference>
<dbReference type="SUPFAM" id="SSF50447">
    <property type="entry name" value="Translation proteins"/>
    <property type="match status" value="1"/>
</dbReference>
<dbReference type="PROSITE" id="PS00301">
    <property type="entry name" value="G_TR_1"/>
    <property type="match status" value="1"/>
</dbReference>
<dbReference type="PROSITE" id="PS51722">
    <property type="entry name" value="G_TR_2"/>
    <property type="match status" value="1"/>
</dbReference>